<gene>
    <name type="ordered locus">PXO_00400</name>
</gene>
<evidence type="ECO:0000255" key="1">
    <source>
        <dbReference type="HAMAP-Rule" id="MF_00489"/>
    </source>
</evidence>
<name>Y400_XANOP</name>
<protein>
    <recommendedName>
        <fullName evidence="1">UPF0178 protein PXO_00400</fullName>
    </recommendedName>
</protein>
<reference key="1">
    <citation type="journal article" date="2008" name="BMC Genomics">
        <title>Genome sequence and rapid evolution of the rice pathogen Xanthomonas oryzae pv. oryzae PXO99A.</title>
        <authorList>
            <person name="Salzberg S.L."/>
            <person name="Sommer D.D."/>
            <person name="Schatz M.C."/>
            <person name="Phillippy A.M."/>
            <person name="Rabinowicz P.D."/>
            <person name="Tsuge S."/>
            <person name="Furutani A."/>
            <person name="Ochiai H."/>
            <person name="Delcher A.L."/>
            <person name="Kelley D."/>
            <person name="Madupu R."/>
            <person name="Puiu D."/>
            <person name="Radune D."/>
            <person name="Shumway M."/>
            <person name="Trapnell C."/>
            <person name="Aparna G."/>
            <person name="Jha G."/>
            <person name="Pandey A."/>
            <person name="Patil P.B."/>
            <person name="Ishihara H."/>
            <person name="Meyer D.F."/>
            <person name="Szurek B."/>
            <person name="Verdier V."/>
            <person name="Koebnik R."/>
            <person name="Dow J.M."/>
            <person name="Ryan R.P."/>
            <person name="Hirata H."/>
            <person name="Tsuyumu S."/>
            <person name="Won Lee S."/>
            <person name="Seo Y.-S."/>
            <person name="Sriariyanum M."/>
            <person name="Ronald P.C."/>
            <person name="Sonti R.V."/>
            <person name="Van Sluys M.-A."/>
            <person name="Leach J.E."/>
            <person name="White F.F."/>
            <person name="Bogdanove A.J."/>
        </authorList>
    </citation>
    <scope>NUCLEOTIDE SEQUENCE [LARGE SCALE GENOMIC DNA]</scope>
    <source>
        <strain>PXO99A</strain>
    </source>
</reference>
<proteinExistence type="inferred from homology"/>
<feature type="chain" id="PRO_1000126218" description="UPF0178 protein PXO_00400">
    <location>
        <begin position="1"/>
        <end position="161"/>
    </location>
</feature>
<sequence length="161" mass="16901">MKPLHTPKPAQIWVDADACPAVIRDILFRAAARTGTALTLVANHSLSTPTLPHVRAIQVPGGPDAADDAIAERVAAGDLVVTQDIPLAARVLEAGATAVGPRGEPFTSNTIKERLSVRGFMEELRGAGIATGGPSALHARDRQAFAAQLDRWLAAQPRPPL</sequence>
<dbReference type="EMBL" id="CP000967">
    <property type="protein sequence ID" value="ACD58568.1"/>
    <property type="molecule type" value="Genomic_DNA"/>
</dbReference>
<dbReference type="RefSeq" id="WP_011408745.1">
    <property type="nucleotide sequence ID" value="NC_010717.2"/>
</dbReference>
<dbReference type="SMR" id="B2SHQ8"/>
<dbReference type="KEGG" id="xop:PXO_00400"/>
<dbReference type="eggNOG" id="COG1671">
    <property type="taxonomic scope" value="Bacteria"/>
</dbReference>
<dbReference type="HOGENOM" id="CLU_106619_2_1_6"/>
<dbReference type="Proteomes" id="UP000001740">
    <property type="component" value="Chromosome"/>
</dbReference>
<dbReference type="CDD" id="cd18720">
    <property type="entry name" value="PIN_YqxD-like"/>
    <property type="match status" value="1"/>
</dbReference>
<dbReference type="HAMAP" id="MF_00489">
    <property type="entry name" value="UPF0178"/>
    <property type="match status" value="1"/>
</dbReference>
<dbReference type="InterPro" id="IPR003791">
    <property type="entry name" value="UPF0178"/>
</dbReference>
<dbReference type="NCBIfam" id="NF001095">
    <property type="entry name" value="PRK00124.1"/>
    <property type="match status" value="1"/>
</dbReference>
<dbReference type="PANTHER" id="PTHR35146">
    <property type="entry name" value="UPF0178 PROTEIN YAII"/>
    <property type="match status" value="1"/>
</dbReference>
<dbReference type="PANTHER" id="PTHR35146:SF1">
    <property type="entry name" value="UPF0178 PROTEIN YAII"/>
    <property type="match status" value="1"/>
</dbReference>
<dbReference type="Pfam" id="PF02639">
    <property type="entry name" value="DUF188"/>
    <property type="match status" value="1"/>
</dbReference>
<organism>
    <name type="scientific">Xanthomonas oryzae pv. oryzae (strain PXO99A)</name>
    <dbReference type="NCBI Taxonomy" id="360094"/>
    <lineage>
        <taxon>Bacteria</taxon>
        <taxon>Pseudomonadati</taxon>
        <taxon>Pseudomonadota</taxon>
        <taxon>Gammaproteobacteria</taxon>
        <taxon>Lysobacterales</taxon>
        <taxon>Lysobacteraceae</taxon>
        <taxon>Xanthomonas</taxon>
    </lineage>
</organism>
<comment type="similarity">
    <text evidence="1">Belongs to the UPF0178 family.</text>
</comment>
<accession>B2SHQ8</accession>